<protein>
    <recommendedName>
        <fullName evidence="1">Large ribosomal subunit protein uL23</fullName>
    </recommendedName>
    <alternativeName>
        <fullName evidence="2">50S ribosomal protein L23</fullName>
    </alternativeName>
</protein>
<organism>
    <name type="scientific">Thermoanaerobacter sp. (strain X514)</name>
    <dbReference type="NCBI Taxonomy" id="399726"/>
    <lineage>
        <taxon>Bacteria</taxon>
        <taxon>Bacillati</taxon>
        <taxon>Bacillota</taxon>
        <taxon>Clostridia</taxon>
        <taxon>Thermoanaerobacterales</taxon>
        <taxon>Thermoanaerobacteraceae</taxon>
        <taxon>Thermoanaerobacter</taxon>
    </lineage>
</organism>
<keyword id="KW-0687">Ribonucleoprotein</keyword>
<keyword id="KW-0689">Ribosomal protein</keyword>
<keyword id="KW-0694">RNA-binding</keyword>
<keyword id="KW-0699">rRNA-binding</keyword>
<gene>
    <name evidence="1" type="primary">rplW</name>
    <name type="ordered locus">Teth514_0869</name>
</gene>
<dbReference type="EMBL" id="CP000923">
    <property type="protein sequence ID" value="ABY92171.1"/>
    <property type="molecule type" value="Genomic_DNA"/>
</dbReference>
<dbReference type="RefSeq" id="WP_003868562.1">
    <property type="nucleotide sequence ID" value="NC_010320.1"/>
</dbReference>
<dbReference type="SMR" id="B0K5P5"/>
<dbReference type="KEGG" id="tex:Teth514_0869"/>
<dbReference type="HOGENOM" id="CLU_037562_3_2_9"/>
<dbReference type="Proteomes" id="UP000002155">
    <property type="component" value="Chromosome"/>
</dbReference>
<dbReference type="GO" id="GO:1990904">
    <property type="term" value="C:ribonucleoprotein complex"/>
    <property type="evidence" value="ECO:0007669"/>
    <property type="project" value="UniProtKB-KW"/>
</dbReference>
<dbReference type="GO" id="GO:0005840">
    <property type="term" value="C:ribosome"/>
    <property type="evidence" value="ECO:0007669"/>
    <property type="project" value="UniProtKB-KW"/>
</dbReference>
<dbReference type="GO" id="GO:0019843">
    <property type="term" value="F:rRNA binding"/>
    <property type="evidence" value="ECO:0007669"/>
    <property type="project" value="UniProtKB-UniRule"/>
</dbReference>
<dbReference type="GO" id="GO:0003735">
    <property type="term" value="F:structural constituent of ribosome"/>
    <property type="evidence" value="ECO:0007669"/>
    <property type="project" value="InterPro"/>
</dbReference>
<dbReference type="GO" id="GO:0006412">
    <property type="term" value="P:translation"/>
    <property type="evidence" value="ECO:0007669"/>
    <property type="project" value="UniProtKB-UniRule"/>
</dbReference>
<dbReference type="FunFam" id="3.30.70.330:FF:000001">
    <property type="entry name" value="50S ribosomal protein L23"/>
    <property type="match status" value="1"/>
</dbReference>
<dbReference type="Gene3D" id="3.30.70.330">
    <property type="match status" value="1"/>
</dbReference>
<dbReference type="HAMAP" id="MF_01369_B">
    <property type="entry name" value="Ribosomal_uL23_B"/>
    <property type="match status" value="1"/>
</dbReference>
<dbReference type="InterPro" id="IPR012677">
    <property type="entry name" value="Nucleotide-bd_a/b_plait_sf"/>
</dbReference>
<dbReference type="InterPro" id="IPR013025">
    <property type="entry name" value="Ribosomal_uL23-like"/>
</dbReference>
<dbReference type="InterPro" id="IPR012678">
    <property type="entry name" value="Ribosomal_uL23/eL15/eS24_sf"/>
</dbReference>
<dbReference type="InterPro" id="IPR001014">
    <property type="entry name" value="Ribosomal_uL23_CS"/>
</dbReference>
<dbReference type="NCBIfam" id="NF004363">
    <property type="entry name" value="PRK05738.2-4"/>
    <property type="match status" value="1"/>
</dbReference>
<dbReference type="PANTHER" id="PTHR11620">
    <property type="entry name" value="60S RIBOSOMAL PROTEIN L23A"/>
    <property type="match status" value="1"/>
</dbReference>
<dbReference type="Pfam" id="PF00276">
    <property type="entry name" value="Ribosomal_L23"/>
    <property type="match status" value="1"/>
</dbReference>
<dbReference type="SUPFAM" id="SSF54189">
    <property type="entry name" value="Ribosomal proteins S24e, L23 and L15e"/>
    <property type="match status" value="1"/>
</dbReference>
<dbReference type="PROSITE" id="PS00050">
    <property type="entry name" value="RIBOSOMAL_L23"/>
    <property type="match status" value="1"/>
</dbReference>
<name>RL23_THEPX</name>
<feature type="chain" id="PRO_1000144616" description="Large ribosomal subunit protein uL23">
    <location>
        <begin position="1"/>
        <end position="97"/>
    </location>
</feature>
<proteinExistence type="inferred from homology"/>
<reference key="1">
    <citation type="submission" date="2008-01" db="EMBL/GenBank/DDBJ databases">
        <title>Complete sequence of Thermoanaerobacter sp. X514.</title>
        <authorList>
            <consortium name="US DOE Joint Genome Institute"/>
            <person name="Copeland A."/>
            <person name="Lucas S."/>
            <person name="Lapidus A."/>
            <person name="Barry K."/>
            <person name="Glavina del Rio T."/>
            <person name="Dalin E."/>
            <person name="Tice H."/>
            <person name="Pitluck S."/>
            <person name="Bruce D."/>
            <person name="Goodwin L."/>
            <person name="Saunders E."/>
            <person name="Brettin T."/>
            <person name="Detter J.C."/>
            <person name="Han C."/>
            <person name="Schmutz J."/>
            <person name="Larimer F."/>
            <person name="Land M."/>
            <person name="Hauser L."/>
            <person name="Kyrpides N."/>
            <person name="Kim E."/>
            <person name="Hemme C."/>
            <person name="Fields M.W."/>
            <person name="He Z."/>
            <person name="Zhou J."/>
            <person name="Richardson P."/>
        </authorList>
    </citation>
    <scope>NUCLEOTIDE SEQUENCE [LARGE SCALE GENOMIC DNA]</scope>
    <source>
        <strain>X514</strain>
    </source>
</reference>
<accession>B0K5P5</accession>
<evidence type="ECO:0000255" key="1">
    <source>
        <dbReference type="HAMAP-Rule" id="MF_01369"/>
    </source>
</evidence>
<evidence type="ECO:0000305" key="2"/>
<sequence>MEARDIIIRPVITEKSMNLMSERKYTFIVDKRANKIQIKKAVEDIFGVKVDKVYTMNYKGKPKRMGKYEGRTEAYKKAIVKLTPDSKGIEFFEGLQA</sequence>
<comment type="function">
    <text evidence="1">One of the early assembly proteins it binds 23S rRNA. One of the proteins that surrounds the polypeptide exit tunnel on the outside of the ribosome. Forms the main docking site for trigger factor binding to the ribosome.</text>
</comment>
<comment type="subunit">
    <text evidence="1">Part of the 50S ribosomal subunit. Contacts protein L29, and trigger factor when it is bound to the ribosome.</text>
</comment>
<comment type="similarity">
    <text evidence="1">Belongs to the universal ribosomal protein uL23 family.</text>
</comment>